<protein>
    <recommendedName>
        <fullName evidence="1">Large ribosomal subunit protein uL24</fullName>
    </recommendedName>
    <alternativeName>
        <fullName evidence="2">50S ribosomal protein L24</fullName>
    </alternativeName>
</protein>
<accession>P10141</accession>
<accession>Q2SRG4</accession>
<proteinExistence type="inferred from homology"/>
<organism>
    <name type="scientific">Mycoplasma capricolum subsp. capricolum (strain California kid / ATCC 27343 / NCTC 10154)</name>
    <dbReference type="NCBI Taxonomy" id="340047"/>
    <lineage>
        <taxon>Bacteria</taxon>
        <taxon>Bacillati</taxon>
        <taxon>Mycoplasmatota</taxon>
        <taxon>Mollicutes</taxon>
        <taxon>Mycoplasmataceae</taxon>
        <taxon>Mycoplasma</taxon>
    </lineage>
</organism>
<feature type="chain" id="PRO_0000130676" description="Large ribosomal subunit protein uL24">
    <location>
        <begin position="1"/>
        <end position="108"/>
    </location>
</feature>
<keyword id="KW-0687">Ribonucleoprotein</keyword>
<keyword id="KW-0689">Ribosomal protein</keyword>
<keyword id="KW-0694">RNA-binding</keyword>
<keyword id="KW-0699">rRNA-binding</keyword>
<sequence length="108" mass="11777">MAKSRILKGDVVKVIAGSHKGQIGPITSITKDKQWVSVQGITVKKHVKPTNEDSEGGIKDIPAKLHISNVALQDPKNKDQVTKVGFEIIDGKKVRIARKSKTQIKTAK</sequence>
<name>RL24_MYCCT</name>
<reference key="1">
    <citation type="journal article" date="1987" name="Mol. Gen. Genet.">
        <title>The ribosomal protein gene cluster of Mycoplasma capricolum.</title>
        <authorList>
            <person name="Ohkubo S."/>
            <person name="Muto A."/>
            <person name="Kawauchi Y."/>
            <person name="Yamao F."/>
            <person name="Osawa S."/>
        </authorList>
    </citation>
    <scope>NUCLEOTIDE SEQUENCE [GENOMIC DNA]</scope>
</reference>
<reference key="2">
    <citation type="submission" date="2005-09" db="EMBL/GenBank/DDBJ databases">
        <authorList>
            <person name="Glass J.I."/>
            <person name="Lartigue C."/>
            <person name="Pfannkoch C."/>
            <person name="Baden-Tillson H."/>
            <person name="Smith H.O."/>
            <person name="Venter J.C."/>
            <person name="Roske K."/>
            <person name="Wise K.S."/>
            <person name="Calcutt M.J."/>
            <person name="Nelson W.C."/>
            <person name="Nierman W.C."/>
        </authorList>
    </citation>
    <scope>NUCLEOTIDE SEQUENCE [LARGE SCALE GENOMIC DNA]</scope>
    <source>
        <strain>California kid / ATCC 27343 / NCTC 10154</strain>
    </source>
</reference>
<gene>
    <name evidence="1" type="primary">rplX</name>
    <name type="ordered locus">MCAP_0685</name>
</gene>
<dbReference type="EMBL" id="X06414">
    <property type="protein sequence ID" value="CAA29715.1"/>
    <property type="molecule type" value="Genomic_DNA"/>
</dbReference>
<dbReference type="EMBL" id="CP000123">
    <property type="protein sequence ID" value="ABC01878.1"/>
    <property type="molecule type" value="Genomic_DNA"/>
</dbReference>
<dbReference type="PIR" id="S02842">
    <property type="entry name" value="R5YM24"/>
</dbReference>
<dbReference type="RefSeq" id="WP_011387538.1">
    <property type="nucleotide sequence ID" value="NC_007633.1"/>
</dbReference>
<dbReference type="SMR" id="P10141"/>
<dbReference type="GeneID" id="93426144"/>
<dbReference type="KEGG" id="mcp:MCAP_0685"/>
<dbReference type="HOGENOM" id="CLU_093315_2_2_14"/>
<dbReference type="PhylomeDB" id="P10141"/>
<dbReference type="Proteomes" id="UP000001928">
    <property type="component" value="Chromosome"/>
</dbReference>
<dbReference type="GO" id="GO:1990904">
    <property type="term" value="C:ribonucleoprotein complex"/>
    <property type="evidence" value="ECO:0007669"/>
    <property type="project" value="UniProtKB-KW"/>
</dbReference>
<dbReference type="GO" id="GO:0005840">
    <property type="term" value="C:ribosome"/>
    <property type="evidence" value="ECO:0007669"/>
    <property type="project" value="UniProtKB-KW"/>
</dbReference>
<dbReference type="GO" id="GO:0019843">
    <property type="term" value="F:rRNA binding"/>
    <property type="evidence" value="ECO:0007669"/>
    <property type="project" value="UniProtKB-UniRule"/>
</dbReference>
<dbReference type="GO" id="GO:0003735">
    <property type="term" value="F:structural constituent of ribosome"/>
    <property type="evidence" value="ECO:0007669"/>
    <property type="project" value="InterPro"/>
</dbReference>
<dbReference type="GO" id="GO:0006412">
    <property type="term" value="P:translation"/>
    <property type="evidence" value="ECO:0007669"/>
    <property type="project" value="UniProtKB-UniRule"/>
</dbReference>
<dbReference type="CDD" id="cd06089">
    <property type="entry name" value="KOW_RPL26"/>
    <property type="match status" value="1"/>
</dbReference>
<dbReference type="Gene3D" id="2.30.30.30">
    <property type="match status" value="1"/>
</dbReference>
<dbReference type="HAMAP" id="MF_01326_B">
    <property type="entry name" value="Ribosomal_uL24_B"/>
    <property type="match status" value="1"/>
</dbReference>
<dbReference type="InterPro" id="IPR005824">
    <property type="entry name" value="KOW"/>
</dbReference>
<dbReference type="InterPro" id="IPR014722">
    <property type="entry name" value="Rib_uL2_dom2"/>
</dbReference>
<dbReference type="InterPro" id="IPR003256">
    <property type="entry name" value="Ribosomal_uL24"/>
</dbReference>
<dbReference type="InterPro" id="IPR005825">
    <property type="entry name" value="Ribosomal_uL24_CS"/>
</dbReference>
<dbReference type="InterPro" id="IPR041988">
    <property type="entry name" value="Ribosomal_uL24_KOW"/>
</dbReference>
<dbReference type="InterPro" id="IPR008991">
    <property type="entry name" value="Translation_prot_SH3-like_sf"/>
</dbReference>
<dbReference type="NCBIfam" id="TIGR01079">
    <property type="entry name" value="rplX_bact"/>
    <property type="match status" value="1"/>
</dbReference>
<dbReference type="PANTHER" id="PTHR12903">
    <property type="entry name" value="MITOCHONDRIAL RIBOSOMAL PROTEIN L24"/>
    <property type="match status" value="1"/>
</dbReference>
<dbReference type="Pfam" id="PF00467">
    <property type="entry name" value="KOW"/>
    <property type="match status" value="1"/>
</dbReference>
<dbReference type="Pfam" id="PF17136">
    <property type="entry name" value="ribosomal_L24"/>
    <property type="match status" value="1"/>
</dbReference>
<dbReference type="SMART" id="SM00739">
    <property type="entry name" value="KOW"/>
    <property type="match status" value="1"/>
</dbReference>
<dbReference type="SUPFAM" id="SSF50104">
    <property type="entry name" value="Translation proteins SH3-like domain"/>
    <property type="match status" value="1"/>
</dbReference>
<dbReference type="PROSITE" id="PS01108">
    <property type="entry name" value="RIBOSOMAL_L24"/>
    <property type="match status" value="1"/>
</dbReference>
<evidence type="ECO:0000255" key="1">
    <source>
        <dbReference type="HAMAP-Rule" id="MF_01326"/>
    </source>
</evidence>
<evidence type="ECO:0000305" key="2"/>
<comment type="function">
    <text evidence="1">One of two assembly initiator proteins, it binds directly to the 5'-end of the 23S rRNA, where it nucleates assembly of the 50S subunit.</text>
</comment>
<comment type="function">
    <text evidence="1">One of the proteins that surrounds the polypeptide exit tunnel on the outside of the subunit.</text>
</comment>
<comment type="subunit">
    <text evidence="1">Part of the 50S ribosomal subunit.</text>
</comment>
<comment type="similarity">
    <text evidence="1">Belongs to the universal ribosomal protein uL24 family.</text>
</comment>